<accession>B6I1P3</accession>
<sequence>MTDVTIKTLAAERQTSVERLVQQFADAGIRKSADDSVSAQEKQTLIDHLNQKNSGPDKLTLQRKTRSTLNIPGTGGKSKSVQIEVRKKRTFVKRDPQEAERLAAEEQAQREAEEQARREAEESAKREAQQKAEREAAEQAKREAAEQAKREAAEKDKVSNQQDDMTKNAQAEKARREQEAAELKRKAEEEARRKLEEEARRVAEEARRMAEENKWTDNAEPTEDSSDYHVTTSQHARQAEDESDREVEGGRGRGRNAKAARPKKGNKHAESKADREEARAAVRGGKGGKRKGSSLQQGFQKPAQAVNRDVVIGETITVGELANKMAVKGSQVIKAMMKLGAMATINQVIDQETAQLVAEEMGHKVILRRENELEEAVMSDRDTGAAAEPRAPVVTIMGHVDHGKTSLLDYIRSTKVASGEAGGITQHIGAYHVETENGMITFLDTPGHAAFTSMRARGAQATDIVVLVVAADDGVMPQTIEAIQHAKAAQVPVVVAVNKIDKPEADPDRVKNELSQYGILPEEWGGESQFVHVSAKAGTGIDELLDAILLQAEVLELKAVRKGMASGAVIESFLDKGRGPVATVLVREGTLHKGDIVLCGFEYGRVRAMRNELGQEVLEAGPSIPVEILGLSGVPAAGDEVTVVRDEKKAREVALYRQGKFREVKLARQQKSKLENMFANMTEGEVHEVNIVLKADVQGSVEAISDSLLKLSTDEVKVKIIGSGVGGITETDATLAAASNAILVGFNVRADASARKVIEAESLDLRYYSVIYNLIDEVKAAMSGMLSPELKQQIIGLAEVRDVFKSPKFGAIAGCMVTEGVVKRHNPIRVLRDNVVIYEGELESLRRFKDDVNEVRNGMECGIGVKNYNDVRTGDVIEVFEIIEIQRTIA</sequence>
<organism>
    <name type="scientific">Escherichia coli (strain SE11)</name>
    <dbReference type="NCBI Taxonomy" id="409438"/>
    <lineage>
        <taxon>Bacteria</taxon>
        <taxon>Pseudomonadati</taxon>
        <taxon>Pseudomonadota</taxon>
        <taxon>Gammaproteobacteria</taxon>
        <taxon>Enterobacterales</taxon>
        <taxon>Enterobacteriaceae</taxon>
        <taxon>Escherichia</taxon>
    </lineage>
</organism>
<evidence type="ECO:0000250" key="1"/>
<evidence type="ECO:0000255" key="2">
    <source>
        <dbReference type="HAMAP-Rule" id="MF_00100"/>
    </source>
</evidence>
<evidence type="ECO:0000256" key="3">
    <source>
        <dbReference type="SAM" id="MobiDB-lite"/>
    </source>
</evidence>
<gene>
    <name evidence="2" type="primary">infB</name>
    <name type="ordered locus">ECSE_3454</name>
</gene>
<keyword id="KW-0007">Acetylation</keyword>
<keyword id="KW-0963">Cytoplasm</keyword>
<keyword id="KW-0342">GTP-binding</keyword>
<keyword id="KW-0396">Initiation factor</keyword>
<keyword id="KW-0547">Nucleotide-binding</keyword>
<keyword id="KW-0648">Protein biosynthesis</keyword>
<comment type="function">
    <text evidence="2">One of the essential components for the initiation of protein synthesis. Protects formylmethionyl-tRNA from spontaneous hydrolysis and promotes its binding to the 30S ribosomal subunits. Also involved in the hydrolysis of GTP during the formation of the 70S ribosomal complex.</text>
</comment>
<comment type="subcellular location">
    <subcellularLocation>
        <location evidence="2">Cytoplasm</location>
    </subcellularLocation>
</comment>
<comment type="similarity">
    <text evidence="2">Belongs to the TRAFAC class translation factor GTPase superfamily. Classic translation factor GTPase family. IF-2 subfamily.</text>
</comment>
<dbReference type="EMBL" id="AP009240">
    <property type="protein sequence ID" value="BAG78978.1"/>
    <property type="molecule type" value="Genomic_DNA"/>
</dbReference>
<dbReference type="RefSeq" id="WP_000133044.1">
    <property type="nucleotide sequence ID" value="NC_011415.1"/>
</dbReference>
<dbReference type="SMR" id="B6I1P3"/>
<dbReference type="GeneID" id="75206024"/>
<dbReference type="KEGG" id="ecy:ECSE_3454"/>
<dbReference type="HOGENOM" id="CLU_006301_6_3_6"/>
<dbReference type="Proteomes" id="UP000008199">
    <property type="component" value="Chromosome"/>
</dbReference>
<dbReference type="GO" id="GO:0005829">
    <property type="term" value="C:cytosol"/>
    <property type="evidence" value="ECO:0007669"/>
    <property type="project" value="TreeGrafter"/>
</dbReference>
<dbReference type="GO" id="GO:0005525">
    <property type="term" value="F:GTP binding"/>
    <property type="evidence" value="ECO:0007669"/>
    <property type="project" value="UniProtKB-KW"/>
</dbReference>
<dbReference type="GO" id="GO:0003924">
    <property type="term" value="F:GTPase activity"/>
    <property type="evidence" value="ECO:0007669"/>
    <property type="project" value="UniProtKB-UniRule"/>
</dbReference>
<dbReference type="GO" id="GO:0097216">
    <property type="term" value="F:guanosine tetraphosphate binding"/>
    <property type="evidence" value="ECO:0007669"/>
    <property type="project" value="UniProtKB-ARBA"/>
</dbReference>
<dbReference type="GO" id="GO:0003743">
    <property type="term" value="F:translation initiation factor activity"/>
    <property type="evidence" value="ECO:0007669"/>
    <property type="project" value="UniProtKB-UniRule"/>
</dbReference>
<dbReference type="CDD" id="cd01887">
    <property type="entry name" value="IF2_eIF5B"/>
    <property type="match status" value="1"/>
</dbReference>
<dbReference type="CDD" id="cd03702">
    <property type="entry name" value="IF2_mtIF2_II"/>
    <property type="match status" value="1"/>
</dbReference>
<dbReference type="CDD" id="cd03692">
    <property type="entry name" value="mtIF2_IVc"/>
    <property type="match status" value="1"/>
</dbReference>
<dbReference type="FunFam" id="2.40.30.10:FF:000007">
    <property type="entry name" value="Translation initiation factor IF-2"/>
    <property type="match status" value="1"/>
</dbReference>
<dbReference type="FunFam" id="2.40.30.10:FF:000008">
    <property type="entry name" value="Translation initiation factor IF-2"/>
    <property type="match status" value="1"/>
</dbReference>
<dbReference type="FunFam" id="3.30.56.50:FF:000001">
    <property type="entry name" value="Translation initiation factor IF-2"/>
    <property type="match status" value="1"/>
</dbReference>
<dbReference type="FunFam" id="3.40.50.10050:FF:000001">
    <property type="entry name" value="Translation initiation factor IF-2"/>
    <property type="match status" value="1"/>
</dbReference>
<dbReference type="FunFam" id="3.40.50.300:FF:000019">
    <property type="entry name" value="Translation initiation factor IF-2"/>
    <property type="match status" value="1"/>
</dbReference>
<dbReference type="Gene3D" id="3.40.50.300">
    <property type="entry name" value="P-loop containing nucleotide triphosphate hydrolases"/>
    <property type="match status" value="1"/>
</dbReference>
<dbReference type="Gene3D" id="3.30.56.50">
    <property type="entry name" value="Putative DNA-binding domain, N-terminal subdomain of bacterial translation initiation factor IF2"/>
    <property type="match status" value="1"/>
</dbReference>
<dbReference type="Gene3D" id="2.40.30.10">
    <property type="entry name" value="Translation factors"/>
    <property type="match status" value="2"/>
</dbReference>
<dbReference type="Gene3D" id="3.40.50.10050">
    <property type="entry name" value="Translation initiation factor IF- 2, domain 3"/>
    <property type="match status" value="1"/>
</dbReference>
<dbReference type="HAMAP" id="MF_00100_B">
    <property type="entry name" value="IF_2_B"/>
    <property type="match status" value="1"/>
</dbReference>
<dbReference type="InterPro" id="IPR009061">
    <property type="entry name" value="DNA-bd_dom_put_sf"/>
</dbReference>
<dbReference type="InterPro" id="IPR053905">
    <property type="entry name" value="EF-G-like_DII"/>
</dbReference>
<dbReference type="InterPro" id="IPR004161">
    <property type="entry name" value="EFTu-like_2"/>
</dbReference>
<dbReference type="InterPro" id="IPR013575">
    <property type="entry name" value="IF2_assoc_dom_bac"/>
</dbReference>
<dbReference type="InterPro" id="IPR044145">
    <property type="entry name" value="IF2_II"/>
</dbReference>
<dbReference type="InterPro" id="IPR006847">
    <property type="entry name" value="IF2_N"/>
</dbReference>
<dbReference type="InterPro" id="IPR027417">
    <property type="entry name" value="P-loop_NTPase"/>
</dbReference>
<dbReference type="InterPro" id="IPR005225">
    <property type="entry name" value="Small_GTP-bd"/>
</dbReference>
<dbReference type="InterPro" id="IPR000795">
    <property type="entry name" value="T_Tr_GTP-bd_dom"/>
</dbReference>
<dbReference type="InterPro" id="IPR000178">
    <property type="entry name" value="TF_IF2_bacterial-like"/>
</dbReference>
<dbReference type="InterPro" id="IPR015760">
    <property type="entry name" value="TIF_IF2"/>
</dbReference>
<dbReference type="InterPro" id="IPR023115">
    <property type="entry name" value="TIF_IF2_dom3"/>
</dbReference>
<dbReference type="InterPro" id="IPR036925">
    <property type="entry name" value="TIF_IF2_dom3_sf"/>
</dbReference>
<dbReference type="InterPro" id="IPR009000">
    <property type="entry name" value="Transl_B-barrel_sf"/>
</dbReference>
<dbReference type="NCBIfam" id="TIGR00487">
    <property type="entry name" value="IF-2"/>
    <property type="match status" value="1"/>
</dbReference>
<dbReference type="NCBIfam" id="TIGR00231">
    <property type="entry name" value="small_GTP"/>
    <property type="match status" value="1"/>
</dbReference>
<dbReference type="PANTHER" id="PTHR43381:SF5">
    <property type="entry name" value="TR-TYPE G DOMAIN-CONTAINING PROTEIN"/>
    <property type="match status" value="1"/>
</dbReference>
<dbReference type="PANTHER" id="PTHR43381">
    <property type="entry name" value="TRANSLATION INITIATION FACTOR IF-2-RELATED"/>
    <property type="match status" value="1"/>
</dbReference>
<dbReference type="Pfam" id="PF22042">
    <property type="entry name" value="EF-G_D2"/>
    <property type="match status" value="1"/>
</dbReference>
<dbReference type="Pfam" id="PF00009">
    <property type="entry name" value="GTP_EFTU"/>
    <property type="match status" value="1"/>
</dbReference>
<dbReference type="Pfam" id="PF03144">
    <property type="entry name" value="GTP_EFTU_D2"/>
    <property type="match status" value="1"/>
</dbReference>
<dbReference type="Pfam" id="PF11987">
    <property type="entry name" value="IF-2"/>
    <property type="match status" value="1"/>
</dbReference>
<dbReference type="Pfam" id="PF08364">
    <property type="entry name" value="IF2_assoc"/>
    <property type="match status" value="1"/>
</dbReference>
<dbReference type="Pfam" id="PF04760">
    <property type="entry name" value="IF2_N"/>
    <property type="match status" value="2"/>
</dbReference>
<dbReference type="SUPFAM" id="SSF52156">
    <property type="entry name" value="Initiation factor IF2/eIF5b, domain 3"/>
    <property type="match status" value="1"/>
</dbReference>
<dbReference type="SUPFAM" id="SSF52540">
    <property type="entry name" value="P-loop containing nucleoside triphosphate hydrolases"/>
    <property type="match status" value="1"/>
</dbReference>
<dbReference type="SUPFAM" id="SSF46955">
    <property type="entry name" value="Putative DNA-binding domain"/>
    <property type="match status" value="1"/>
</dbReference>
<dbReference type="SUPFAM" id="SSF50447">
    <property type="entry name" value="Translation proteins"/>
    <property type="match status" value="2"/>
</dbReference>
<dbReference type="PROSITE" id="PS51722">
    <property type="entry name" value="G_TR_2"/>
    <property type="match status" value="1"/>
</dbReference>
<dbReference type="PROSITE" id="PS01176">
    <property type="entry name" value="IF2"/>
    <property type="match status" value="1"/>
</dbReference>
<feature type="chain" id="PRO_1000093784" description="Translation initiation factor IF-2">
    <location>
        <begin position="1"/>
        <end position="890"/>
    </location>
</feature>
<feature type="domain" description="tr-type G">
    <location>
        <begin position="389"/>
        <end position="558"/>
    </location>
</feature>
<feature type="region of interest" description="Disordered" evidence="3">
    <location>
        <begin position="45"/>
        <end position="304"/>
    </location>
</feature>
<feature type="region of interest" description="G1" evidence="1">
    <location>
        <begin position="398"/>
        <end position="405"/>
    </location>
</feature>
<feature type="region of interest" description="G2" evidence="1">
    <location>
        <begin position="423"/>
        <end position="427"/>
    </location>
</feature>
<feature type="region of interest" description="G3" evidence="1">
    <location>
        <begin position="444"/>
        <end position="447"/>
    </location>
</feature>
<feature type="region of interest" description="G4" evidence="1">
    <location>
        <begin position="498"/>
        <end position="501"/>
    </location>
</feature>
<feature type="region of interest" description="G5" evidence="1">
    <location>
        <begin position="534"/>
        <end position="536"/>
    </location>
</feature>
<feature type="compositionally biased region" description="Polar residues" evidence="3">
    <location>
        <begin position="67"/>
        <end position="81"/>
    </location>
</feature>
<feature type="compositionally biased region" description="Basic and acidic residues" evidence="3">
    <location>
        <begin position="92"/>
        <end position="217"/>
    </location>
</feature>
<feature type="compositionally biased region" description="Basic residues" evidence="3">
    <location>
        <begin position="252"/>
        <end position="266"/>
    </location>
</feature>
<feature type="compositionally biased region" description="Basic and acidic residues" evidence="3">
    <location>
        <begin position="267"/>
        <end position="280"/>
    </location>
</feature>
<feature type="binding site" evidence="2">
    <location>
        <begin position="398"/>
        <end position="405"/>
    </location>
    <ligand>
        <name>GTP</name>
        <dbReference type="ChEBI" id="CHEBI:37565"/>
    </ligand>
</feature>
<feature type="binding site" evidence="2">
    <location>
        <begin position="444"/>
        <end position="448"/>
    </location>
    <ligand>
        <name>GTP</name>
        <dbReference type="ChEBI" id="CHEBI:37565"/>
    </ligand>
</feature>
<feature type="binding site" evidence="2">
    <location>
        <begin position="498"/>
        <end position="501"/>
    </location>
    <ligand>
        <name>GTP</name>
        <dbReference type="ChEBI" id="CHEBI:37565"/>
    </ligand>
</feature>
<feature type="modified residue" description="N6-acetyllysine" evidence="1">
    <location>
        <position position="808"/>
    </location>
</feature>
<reference key="1">
    <citation type="journal article" date="2008" name="DNA Res.">
        <title>Complete genome sequence and comparative analysis of the wild-type commensal Escherichia coli strain SE11 isolated from a healthy adult.</title>
        <authorList>
            <person name="Oshima K."/>
            <person name="Toh H."/>
            <person name="Ogura Y."/>
            <person name="Sasamoto H."/>
            <person name="Morita H."/>
            <person name="Park S.-H."/>
            <person name="Ooka T."/>
            <person name="Iyoda S."/>
            <person name="Taylor T.D."/>
            <person name="Hayashi T."/>
            <person name="Itoh K."/>
            <person name="Hattori M."/>
        </authorList>
    </citation>
    <scope>NUCLEOTIDE SEQUENCE [LARGE SCALE GENOMIC DNA]</scope>
    <source>
        <strain>SE11</strain>
    </source>
</reference>
<proteinExistence type="inferred from homology"/>
<name>IF2_ECOSE</name>
<protein>
    <recommendedName>
        <fullName evidence="2">Translation initiation factor IF-2</fullName>
    </recommendedName>
</protein>